<name>RL34_BARHE</name>
<protein>
    <recommendedName>
        <fullName evidence="1">Large ribosomal subunit protein bL34</fullName>
    </recommendedName>
    <alternativeName>
        <fullName evidence="2">50S ribosomal protein L34</fullName>
    </alternativeName>
</protein>
<evidence type="ECO:0000255" key="1">
    <source>
        <dbReference type="HAMAP-Rule" id="MF_00391"/>
    </source>
</evidence>
<evidence type="ECO:0000305" key="2"/>
<gene>
    <name evidence="1" type="primary">rpmH</name>
    <name type="ordered locus">BH12390</name>
</gene>
<comment type="similarity">
    <text evidence="1">Belongs to the bacterial ribosomal protein bL34 family.</text>
</comment>
<accession>Q6G2G8</accession>
<proteinExistence type="inferred from homology"/>
<keyword id="KW-0687">Ribonucleoprotein</keyword>
<keyword id="KW-0689">Ribosomal protein</keyword>
<sequence>MKRTYQPSKLVRKRRHGFRARMATASGRKVIAARRARGRKRLSA</sequence>
<feature type="chain" id="PRO_0000187343" description="Large ribosomal subunit protein bL34">
    <location>
        <begin position="1"/>
        <end position="44"/>
    </location>
</feature>
<organism>
    <name type="scientific">Bartonella henselae (strain ATCC 49882 / DSM 28221 / CCUG 30454 / Houston 1)</name>
    <name type="common">Rochalimaea henselae</name>
    <dbReference type="NCBI Taxonomy" id="283166"/>
    <lineage>
        <taxon>Bacteria</taxon>
        <taxon>Pseudomonadati</taxon>
        <taxon>Pseudomonadota</taxon>
        <taxon>Alphaproteobacteria</taxon>
        <taxon>Hyphomicrobiales</taxon>
        <taxon>Bartonellaceae</taxon>
        <taxon>Bartonella</taxon>
    </lineage>
</organism>
<reference key="1">
    <citation type="journal article" date="2004" name="Proc. Natl. Acad. Sci. U.S.A.">
        <title>The louse-borne human pathogen Bartonella quintana is a genomic derivative of the zoonotic agent Bartonella henselae.</title>
        <authorList>
            <person name="Alsmark U.C.M."/>
            <person name="Frank A.C."/>
            <person name="Karlberg E.O."/>
            <person name="Legault B.-A."/>
            <person name="Ardell D.H."/>
            <person name="Canbaeck B."/>
            <person name="Eriksson A.-S."/>
            <person name="Naeslund A.K."/>
            <person name="Handley S.A."/>
            <person name="Huvet M."/>
            <person name="La Scola B."/>
            <person name="Holmberg M."/>
            <person name="Andersson S.G.E."/>
        </authorList>
    </citation>
    <scope>NUCLEOTIDE SEQUENCE [LARGE SCALE GENOMIC DNA]</scope>
    <source>
        <strain>ATCC 49882 / DSM 28221 / CCUG 30454 / Houston 1</strain>
    </source>
</reference>
<dbReference type="EMBL" id="BX897699">
    <property type="protein sequence ID" value="CAF28021.1"/>
    <property type="molecule type" value="Genomic_DNA"/>
</dbReference>
<dbReference type="RefSeq" id="WP_011181069.1">
    <property type="nucleotide sequence ID" value="NZ_LRIJ02000001.1"/>
</dbReference>
<dbReference type="SMR" id="Q6G2G8"/>
<dbReference type="PaxDb" id="283166-BH12390"/>
<dbReference type="EnsemblBacteria" id="CAF28021">
    <property type="protein sequence ID" value="CAF28021"/>
    <property type="gene ID" value="BH12390"/>
</dbReference>
<dbReference type="GeneID" id="92985846"/>
<dbReference type="KEGG" id="bhe:BH12390"/>
<dbReference type="eggNOG" id="COG0230">
    <property type="taxonomic scope" value="Bacteria"/>
</dbReference>
<dbReference type="OrthoDB" id="9804164at2"/>
<dbReference type="Proteomes" id="UP000000421">
    <property type="component" value="Chromosome"/>
</dbReference>
<dbReference type="GO" id="GO:1990904">
    <property type="term" value="C:ribonucleoprotein complex"/>
    <property type="evidence" value="ECO:0007669"/>
    <property type="project" value="UniProtKB-KW"/>
</dbReference>
<dbReference type="GO" id="GO:0005840">
    <property type="term" value="C:ribosome"/>
    <property type="evidence" value="ECO:0007669"/>
    <property type="project" value="UniProtKB-KW"/>
</dbReference>
<dbReference type="GO" id="GO:0003735">
    <property type="term" value="F:structural constituent of ribosome"/>
    <property type="evidence" value="ECO:0007669"/>
    <property type="project" value="InterPro"/>
</dbReference>
<dbReference type="GO" id="GO:0006412">
    <property type="term" value="P:translation"/>
    <property type="evidence" value="ECO:0007669"/>
    <property type="project" value="UniProtKB-UniRule"/>
</dbReference>
<dbReference type="FunFam" id="1.10.287.3980:FF:000001">
    <property type="entry name" value="Mitochondrial ribosomal protein L34"/>
    <property type="match status" value="1"/>
</dbReference>
<dbReference type="Gene3D" id="1.10.287.3980">
    <property type="match status" value="1"/>
</dbReference>
<dbReference type="HAMAP" id="MF_00391">
    <property type="entry name" value="Ribosomal_bL34"/>
    <property type="match status" value="1"/>
</dbReference>
<dbReference type="InterPro" id="IPR000271">
    <property type="entry name" value="Ribosomal_bL34"/>
</dbReference>
<dbReference type="InterPro" id="IPR020939">
    <property type="entry name" value="Ribosomal_bL34_CS"/>
</dbReference>
<dbReference type="NCBIfam" id="TIGR01030">
    <property type="entry name" value="rpmH_bact"/>
    <property type="match status" value="1"/>
</dbReference>
<dbReference type="PANTHER" id="PTHR14503:SF4">
    <property type="entry name" value="LARGE RIBOSOMAL SUBUNIT PROTEIN BL34M"/>
    <property type="match status" value="1"/>
</dbReference>
<dbReference type="PANTHER" id="PTHR14503">
    <property type="entry name" value="MITOCHONDRIAL RIBOSOMAL PROTEIN 34 FAMILY MEMBER"/>
    <property type="match status" value="1"/>
</dbReference>
<dbReference type="Pfam" id="PF00468">
    <property type="entry name" value="Ribosomal_L34"/>
    <property type="match status" value="1"/>
</dbReference>
<dbReference type="PROSITE" id="PS00784">
    <property type="entry name" value="RIBOSOMAL_L34"/>
    <property type="match status" value="1"/>
</dbReference>